<dbReference type="EMBL" id="CH940652">
    <property type="protein sequence ID" value="EDW59162.1"/>
    <property type="molecule type" value="Genomic_DNA"/>
</dbReference>
<dbReference type="RefSeq" id="XP_002056050.1">
    <property type="nucleotide sequence ID" value="XM_002056014.4"/>
</dbReference>
<dbReference type="SMR" id="B4M686"/>
<dbReference type="FunCoup" id="B4M686">
    <property type="interactions" value="1437"/>
</dbReference>
<dbReference type="STRING" id="7244.B4M686"/>
<dbReference type="EnsemblMetazoa" id="FBtr0226361">
    <property type="protein sequence ID" value="FBpp0224853"/>
    <property type="gene ID" value="FBgn0197716"/>
</dbReference>
<dbReference type="EnsemblMetazoa" id="XM_002056014.3">
    <property type="protein sequence ID" value="XP_002056050.1"/>
    <property type="gene ID" value="LOC6632727"/>
</dbReference>
<dbReference type="GeneID" id="6632727"/>
<dbReference type="KEGG" id="dvi:6632727"/>
<dbReference type="CTD" id="41230"/>
<dbReference type="eggNOG" id="KOG1400">
    <property type="taxonomic scope" value="Eukaryota"/>
</dbReference>
<dbReference type="HOGENOM" id="CLU_028769_0_0_1"/>
<dbReference type="InParanoid" id="B4M686"/>
<dbReference type="OMA" id="SMRDKYQ"/>
<dbReference type="OrthoDB" id="267517at2759"/>
<dbReference type="PhylomeDB" id="B4M686"/>
<dbReference type="UniPathway" id="UPA00143"/>
<dbReference type="Proteomes" id="UP000008792">
    <property type="component" value="Unassembled WGS sequence"/>
</dbReference>
<dbReference type="GO" id="GO:0005634">
    <property type="term" value="C:nucleus"/>
    <property type="evidence" value="ECO:0007669"/>
    <property type="project" value="UniProtKB-SubCell"/>
</dbReference>
<dbReference type="GO" id="GO:0046872">
    <property type="term" value="F:metal ion binding"/>
    <property type="evidence" value="ECO:0007669"/>
    <property type="project" value="UniProtKB-KW"/>
</dbReference>
<dbReference type="GO" id="GO:1900075">
    <property type="term" value="P:positive regulation of neuromuscular synaptic transmission"/>
    <property type="evidence" value="ECO:0007669"/>
    <property type="project" value="EnsemblMetazoa"/>
</dbReference>
<dbReference type="GO" id="GO:0030177">
    <property type="term" value="P:positive regulation of Wnt signaling pathway"/>
    <property type="evidence" value="ECO:0007669"/>
    <property type="project" value="EnsemblMetazoa"/>
</dbReference>
<dbReference type="GO" id="GO:0016567">
    <property type="term" value="P:protein ubiquitination"/>
    <property type="evidence" value="ECO:0007669"/>
    <property type="project" value="UniProtKB-UniPathway"/>
</dbReference>
<dbReference type="CDD" id="cd15777">
    <property type="entry name" value="CRBN_C_like"/>
    <property type="match status" value="1"/>
</dbReference>
<dbReference type="FunFam" id="2.170.150.20:FF:000005">
    <property type="entry name" value="Blast:Protein cereblon homolog"/>
    <property type="match status" value="1"/>
</dbReference>
<dbReference type="Gene3D" id="1.20.58.1480">
    <property type="match status" value="1"/>
</dbReference>
<dbReference type="Gene3D" id="2.30.130.40">
    <property type="entry name" value="LON domain-like"/>
    <property type="match status" value="1"/>
</dbReference>
<dbReference type="Gene3D" id="2.170.150.20">
    <property type="entry name" value="Peptide methionine sulfoxide reductase"/>
    <property type="match status" value="1"/>
</dbReference>
<dbReference type="InterPro" id="IPR034750">
    <property type="entry name" value="CULT"/>
</dbReference>
<dbReference type="InterPro" id="IPR003111">
    <property type="entry name" value="Lon_prtase_N"/>
</dbReference>
<dbReference type="InterPro" id="IPR046336">
    <property type="entry name" value="Lon_prtase_N_sf"/>
</dbReference>
<dbReference type="InterPro" id="IPR004910">
    <property type="entry name" value="Yippee/Mis18/Cereblon"/>
</dbReference>
<dbReference type="Pfam" id="PF03226">
    <property type="entry name" value="Yippee-Mis18"/>
    <property type="match status" value="1"/>
</dbReference>
<dbReference type="PROSITE" id="PS51788">
    <property type="entry name" value="CULT"/>
    <property type="match status" value="1"/>
</dbReference>
<dbReference type="PROSITE" id="PS51787">
    <property type="entry name" value="LON_N"/>
    <property type="match status" value="1"/>
</dbReference>
<gene>
    <name evidence="2" type="primary">ohgt</name>
    <name evidence="2" type="synonym">crbn</name>
    <name type="ORF">GJ10436</name>
</gene>
<comment type="function">
    <text evidence="2">Substrate recognition component of a DCX (DDB1-CUL4-X-box) E3 protein ligase complex that mediates the ubiquitination and subsequent proteasomal degradation of target proteins. Has an essential role in mediating growth by negatively regulating insulin signaling. It also has a role in maintaining presynaptic function in the neuromuscular junction synapses of third-instar larvae.</text>
</comment>
<comment type="pathway">
    <text evidence="1">Protein modification; protein ubiquitination.</text>
</comment>
<comment type="subunit">
    <text evidence="1 2">Likely a component of a DCX (DDB1-CUL4-X-box) protein ligase complex (By similarity). May interact with pic/DDB1 (By similarity).</text>
</comment>
<comment type="subcellular location">
    <subcellularLocation>
        <location evidence="2">Nucleus</location>
    </subcellularLocation>
</comment>
<comment type="PTM">
    <text evidence="2">Ubiquitinated.</text>
</comment>
<comment type="similarity">
    <text evidence="6">Belongs to the CRBN family.</text>
</comment>
<name>CRBN_DROVI</name>
<evidence type="ECO:0000250" key="1">
    <source>
        <dbReference type="UniProtKB" id="Q96SW2"/>
    </source>
</evidence>
<evidence type="ECO:0000250" key="2">
    <source>
        <dbReference type="UniProtKB" id="Q9VH36"/>
    </source>
</evidence>
<evidence type="ECO:0000255" key="3">
    <source>
        <dbReference type="PROSITE-ProRule" id="PRU01123"/>
    </source>
</evidence>
<evidence type="ECO:0000255" key="4">
    <source>
        <dbReference type="PROSITE-ProRule" id="PRU01124"/>
    </source>
</evidence>
<evidence type="ECO:0000256" key="5">
    <source>
        <dbReference type="SAM" id="MobiDB-lite"/>
    </source>
</evidence>
<evidence type="ECO:0000305" key="6"/>
<feature type="chain" id="PRO_0000393887" description="Protein cereblon">
    <location>
        <begin position="1"/>
        <end position="640"/>
    </location>
</feature>
<feature type="domain" description="Lon N-terminal" evidence="3">
    <location>
        <begin position="278"/>
        <end position="506"/>
    </location>
</feature>
<feature type="domain" description="CULT" evidence="4">
    <location>
        <begin position="505"/>
        <end position="614"/>
    </location>
</feature>
<feature type="region of interest" description="Disordered" evidence="5">
    <location>
        <begin position="1"/>
        <end position="25"/>
    </location>
</feature>
<feature type="region of interest" description="Disordered" evidence="5">
    <location>
        <begin position="92"/>
        <end position="159"/>
    </location>
</feature>
<feature type="compositionally biased region" description="Acidic residues" evidence="5">
    <location>
        <begin position="1"/>
        <end position="11"/>
    </location>
</feature>
<feature type="compositionally biased region" description="Low complexity" evidence="5">
    <location>
        <begin position="113"/>
        <end position="137"/>
    </location>
</feature>
<feature type="binding site" evidence="4">
    <location>
        <position position="510"/>
    </location>
    <ligand>
        <name>Zn(2+)</name>
        <dbReference type="ChEBI" id="CHEBI:29105"/>
    </ligand>
</feature>
<feature type="binding site" evidence="4">
    <location>
        <position position="513"/>
    </location>
    <ligand>
        <name>Zn(2+)</name>
        <dbReference type="ChEBI" id="CHEBI:29105"/>
    </ligand>
</feature>
<feature type="binding site" evidence="4">
    <location>
        <position position="579"/>
    </location>
    <ligand>
        <name>Zn(2+)</name>
        <dbReference type="ChEBI" id="CHEBI:29105"/>
    </ligand>
</feature>
<feature type="binding site" evidence="4">
    <location>
        <position position="582"/>
    </location>
    <ligand>
        <name>Zn(2+)</name>
        <dbReference type="ChEBI" id="CHEBI:29105"/>
    </ligand>
</feature>
<keyword id="KW-0479">Metal-binding</keyword>
<keyword id="KW-0539">Nucleus</keyword>
<keyword id="KW-1185">Reference proteome</keyword>
<keyword id="KW-0832">Ubl conjugation</keyword>
<keyword id="KW-0833">Ubl conjugation pathway</keyword>
<keyword id="KW-0862">Zinc</keyword>
<proteinExistence type="inferred from homology"/>
<protein>
    <recommendedName>
        <fullName evidence="2">Protein cereblon</fullName>
    </recommendedName>
    <alternativeName>
        <fullName evidence="2">Protein ohgata</fullName>
    </alternativeName>
</protein>
<accession>B4M686</accession>
<organism>
    <name type="scientific">Drosophila virilis</name>
    <name type="common">Fruit fly</name>
    <dbReference type="NCBI Taxonomy" id="7244"/>
    <lineage>
        <taxon>Eukaryota</taxon>
        <taxon>Metazoa</taxon>
        <taxon>Ecdysozoa</taxon>
        <taxon>Arthropoda</taxon>
        <taxon>Hexapoda</taxon>
        <taxon>Insecta</taxon>
        <taxon>Pterygota</taxon>
        <taxon>Neoptera</taxon>
        <taxon>Endopterygota</taxon>
        <taxon>Diptera</taxon>
        <taxon>Brachycera</taxon>
        <taxon>Muscomorpha</taxon>
        <taxon>Ephydroidea</taxon>
        <taxon>Drosophilidae</taxon>
        <taxon>Drosophila</taxon>
    </lineage>
</organism>
<reference key="1">
    <citation type="journal article" date="2007" name="Nature">
        <title>Evolution of genes and genomes on the Drosophila phylogeny.</title>
        <authorList>
            <consortium name="Drosophila 12 genomes consortium"/>
        </authorList>
    </citation>
    <scope>NUCLEOTIDE SEQUENCE [LARGE SCALE GENOMIC DNA]</scope>
    <source>
        <strain>Tucson 15010-1051.87</strain>
    </source>
</reference>
<sequence length="640" mass="72352">MDDEETAEIDETNSAAADMQVELGPEQLQQEMPQNGSGDGAAVSAIAAVSTAHVNSRARLENMIEEVDNMFEEVSELMVDVTELMRRANELREDPGTAALAENARPPAEIEEQPAQQEEQASLPYDSPSRASISSRHSGSDMSLDSPGSEDDSDAEAVPRWMIPANRVRSAVDMLVSQARNRDGGIATLLRRENFLQRVRSMVFSQDRIRGRASDEANADVINTVPDETPESPPAPLDVDMEEGVRFDTNLPAEHSYFGTNLNRVPGVDYLEVGSTHRMLIFMHQHILFPGEVLPFMIHGSIIDEEIQDSGRDGVIFGVGFPLMQPPDDNPHKLYGVTCQIYEKGESGRQHVFYKSRALQRIVINCDDIQGPPQYIARNPTMKCYSKVKILPEYFLPEPLKCIDMGSLNRFRDIPSMEKKFRRYQLTSTPWPYEACEEYSFEHIVEKARQKLEIHKIDTMPKCPIQLSFWLVRNLHLTEKMMRLTFLTDSVNIRLQIIDTTLKQESLFYCRYCNSSLAYCSDLFAMSKHGVQTQYCNSAGYIHETNTVYRVIAHAIGYSGEPSTEFSWFPGYQWHIIICKFCAQHVGWEFKAVEPNLAPKVFFGLAGSSVRIGKTSERTPTHGSTFVVRNLLRLVSRELE</sequence>